<dbReference type="EC" id="6.3.2.9" evidence="1"/>
<dbReference type="EMBL" id="CP000240">
    <property type="protein sequence ID" value="ABD01290.1"/>
    <property type="molecule type" value="Genomic_DNA"/>
</dbReference>
<dbReference type="RefSeq" id="WP_011431959.1">
    <property type="nucleotide sequence ID" value="NC_007776.1"/>
</dbReference>
<dbReference type="SMR" id="Q2JHP5"/>
<dbReference type="STRING" id="321332.CYB_0292"/>
<dbReference type="KEGG" id="cyb:CYB_0292"/>
<dbReference type="eggNOG" id="COG0771">
    <property type="taxonomic scope" value="Bacteria"/>
</dbReference>
<dbReference type="HOGENOM" id="CLU_032540_0_0_3"/>
<dbReference type="OrthoDB" id="9809796at2"/>
<dbReference type="UniPathway" id="UPA00219"/>
<dbReference type="Proteomes" id="UP000001938">
    <property type="component" value="Chromosome"/>
</dbReference>
<dbReference type="GO" id="GO:0005737">
    <property type="term" value="C:cytoplasm"/>
    <property type="evidence" value="ECO:0007669"/>
    <property type="project" value="UniProtKB-SubCell"/>
</dbReference>
<dbReference type="GO" id="GO:0005524">
    <property type="term" value="F:ATP binding"/>
    <property type="evidence" value="ECO:0007669"/>
    <property type="project" value="UniProtKB-UniRule"/>
</dbReference>
<dbReference type="GO" id="GO:0008764">
    <property type="term" value="F:UDP-N-acetylmuramoylalanine-D-glutamate ligase activity"/>
    <property type="evidence" value="ECO:0007669"/>
    <property type="project" value="UniProtKB-UniRule"/>
</dbReference>
<dbReference type="GO" id="GO:0051301">
    <property type="term" value="P:cell division"/>
    <property type="evidence" value="ECO:0007669"/>
    <property type="project" value="UniProtKB-KW"/>
</dbReference>
<dbReference type="GO" id="GO:0071555">
    <property type="term" value="P:cell wall organization"/>
    <property type="evidence" value="ECO:0007669"/>
    <property type="project" value="UniProtKB-KW"/>
</dbReference>
<dbReference type="GO" id="GO:0009252">
    <property type="term" value="P:peptidoglycan biosynthetic process"/>
    <property type="evidence" value="ECO:0007669"/>
    <property type="project" value="UniProtKB-UniRule"/>
</dbReference>
<dbReference type="GO" id="GO:0008360">
    <property type="term" value="P:regulation of cell shape"/>
    <property type="evidence" value="ECO:0007669"/>
    <property type="project" value="UniProtKB-KW"/>
</dbReference>
<dbReference type="Gene3D" id="3.90.190.20">
    <property type="entry name" value="Mur ligase, C-terminal domain"/>
    <property type="match status" value="1"/>
</dbReference>
<dbReference type="Gene3D" id="3.40.1190.10">
    <property type="entry name" value="Mur-like, catalytic domain"/>
    <property type="match status" value="1"/>
</dbReference>
<dbReference type="Gene3D" id="3.40.50.720">
    <property type="entry name" value="NAD(P)-binding Rossmann-like Domain"/>
    <property type="match status" value="1"/>
</dbReference>
<dbReference type="HAMAP" id="MF_00639">
    <property type="entry name" value="MurD"/>
    <property type="match status" value="1"/>
</dbReference>
<dbReference type="InterPro" id="IPR036565">
    <property type="entry name" value="Mur-like_cat_sf"/>
</dbReference>
<dbReference type="InterPro" id="IPR036615">
    <property type="entry name" value="Mur_ligase_C_dom_sf"/>
</dbReference>
<dbReference type="InterPro" id="IPR013221">
    <property type="entry name" value="Mur_ligase_cen"/>
</dbReference>
<dbReference type="InterPro" id="IPR005762">
    <property type="entry name" value="MurD"/>
</dbReference>
<dbReference type="NCBIfam" id="TIGR01087">
    <property type="entry name" value="murD"/>
    <property type="match status" value="1"/>
</dbReference>
<dbReference type="PANTHER" id="PTHR43692">
    <property type="entry name" value="UDP-N-ACETYLMURAMOYLALANINE--D-GLUTAMATE LIGASE"/>
    <property type="match status" value="1"/>
</dbReference>
<dbReference type="PANTHER" id="PTHR43692:SF1">
    <property type="entry name" value="UDP-N-ACETYLMURAMOYLALANINE--D-GLUTAMATE LIGASE"/>
    <property type="match status" value="1"/>
</dbReference>
<dbReference type="Pfam" id="PF08245">
    <property type="entry name" value="Mur_ligase_M"/>
    <property type="match status" value="1"/>
</dbReference>
<dbReference type="Pfam" id="PF21799">
    <property type="entry name" value="MurD-like_N"/>
    <property type="match status" value="1"/>
</dbReference>
<dbReference type="Pfam" id="PF13450">
    <property type="entry name" value="NAD_binding_8"/>
    <property type="match status" value="1"/>
</dbReference>
<dbReference type="SUPFAM" id="SSF51984">
    <property type="entry name" value="MurCD N-terminal domain"/>
    <property type="match status" value="1"/>
</dbReference>
<dbReference type="SUPFAM" id="SSF53623">
    <property type="entry name" value="MurD-like peptide ligases, catalytic domain"/>
    <property type="match status" value="1"/>
</dbReference>
<dbReference type="SUPFAM" id="SSF53244">
    <property type="entry name" value="MurD-like peptide ligases, peptide-binding domain"/>
    <property type="match status" value="1"/>
</dbReference>
<keyword id="KW-0067">ATP-binding</keyword>
<keyword id="KW-0131">Cell cycle</keyword>
<keyword id="KW-0132">Cell division</keyword>
<keyword id="KW-0133">Cell shape</keyword>
<keyword id="KW-0961">Cell wall biogenesis/degradation</keyword>
<keyword id="KW-0963">Cytoplasm</keyword>
<keyword id="KW-0436">Ligase</keyword>
<keyword id="KW-0547">Nucleotide-binding</keyword>
<keyword id="KW-0573">Peptidoglycan synthesis</keyword>
<keyword id="KW-1185">Reference proteome</keyword>
<feature type="chain" id="PRO_0000257254" description="UDP-N-acetylmuramoylalanine--D-glutamate ligase">
    <location>
        <begin position="1"/>
        <end position="480"/>
    </location>
</feature>
<feature type="binding site" evidence="1">
    <location>
        <begin position="110"/>
        <end position="116"/>
    </location>
    <ligand>
        <name>ATP</name>
        <dbReference type="ChEBI" id="CHEBI:30616"/>
    </ligand>
</feature>
<comment type="function">
    <text evidence="1">Cell wall formation. Catalyzes the addition of glutamate to the nucleotide precursor UDP-N-acetylmuramoyl-L-alanine (UMA).</text>
</comment>
<comment type="catalytic activity">
    <reaction evidence="1">
        <text>UDP-N-acetyl-alpha-D-muramoyl-L-alanine + D-glutamate + ATP = UDP-N-acetyl-alpha-D-muramoyl-L-alanyl-D-glutamate + ADP + phosphate + H(+)</text>
        <dbReference type="Rhea" id="RHEA:16429"/>
        <dbReference type="ChEBI" id="CHEBI:15378"/>
        <dbReference type="ChEBI" id="CHEBI:29986"/>
        <dbReference type="ChEBI" id="CHEBI:30616"/>
        <dbReference type="ChEBI" id="CHEBI:43474"/>
        <dbReference type="ChEBI" id="CHEBI:83898"/>
        <dbReference type="ChEBI" id="CHEBI:83900"/>
        <dbReference type="ChEBI" id="CHEBI:456216"/>
        <dbReference type="EC" id="6.3.2.9"/>
    </reaction>
</comment>
<comment type="pathway">
    <text evidence="1">Cell wall biogenesis; peptidoglycan biosynthesis.</text>
</comment>
<comment type="subcellular location">
    <subcellularLocation>
        <location evidence="1">Cytoplasm</location>
    </subcellularLocation>
</comment>
<comment type="similarity">
    <text evidence="1">Belongs to the MurCDEF family.</text>
</comment>
<accession>Q2JHP5</accession>
<organism>
    <name type="scientific">Synechococcus sp. (strain JA-2-3B'a(2-13))</name>
    <name type="common">Cyanobacteria bacterium Yellowstone B-Prime</name>
    <dbReference type="NCBI Taxonomy" id="321332"/>
    <lineage>
        <taxon>Bacteria</taxon>
        <taxon>Bacillati</taxon>
        <taxon>Cyanobacteriota</taxon>
        <taxon>Cyanophyceae</taxon>
        <taxon>Synechococcales</taxon>
        <taxon>Synechococcaceae</taxon>
        <taxon>Synechococcus</taxon>
    </lineage>
</organism>
<gene>
    <name evidence="1" type="primary">murD</name>
    <name type="ordered locus">CYB_0292</name>
</gene>
<protein>
    <recommendedName>
        <fullName evidence="1">UDP-N-acetylmuramoylalanine--D-glutamate ligase</fullName>
        <ecNumber evidence="1">6.3.2.9</ecNumber>
    </recommendedName>
    <alternativeName>
        <fullName evidence="1">D-glutamic acid-adding enzyme</fullName>
    </alternativeName>
    <alternativeName>
        <fullName evidence="1">UDP-N-acetylmuramoyl-L-alanyl-D-glutamate synthetase</fullName>
    </alternativeName>
</protein>
<proteinExistence type="inferred from homology"/>
<sequence>MQHQVLGLGIAGLAAARLLRAQGYEVLVWDEQDSPLLRQRQAELNQEGIPVRLGQPFQLAEGVKQVVVSPGIAWDHPLLQAVRQQGIPVVGEAELAWIYLDHLPWVGITGTNGKSTTTALVAEMFKAAGLQGIPCGNIGLPLSQVALATLQGKLKPDWIVAELSSYQLEASSRLMSSTPGGPPRIGVWTTFTPDHLERHGTLERYASFKARLLDRAQWRVLNGEDPYLCRRRQDWEKTYWISLAAPQLCCDQDPTATLDLRENRLYIQGEMVAELEDFAERCPGQHNLQNLLLAAAAARLAGLPNVAIQKAIRSFAGMPHRLERVAQIQVGATPIRFVNDSKATNYEAGWVALNALSPPIILIAGGRAKQGDPGAWLRLIRAKVARVLLMGESAPVLAEALQGIHYTDVELVPTLDVAVERAFAAACSLSRQAQRLGKPAQPITVLLSPACASFDQYSSFEHRGNHFRACCQALQGSLEC</sequence>
<evidence type="ECO:0000255" key="1">
    <source>
        <dbReference type="HAMAP-Rule" id="MF_00639"/>
    </source>
</evidence>
<name>MURD_SYNJB</name>
<reference key="1">
    <citation type="journal article" date="2007" name="ISME J.">
        <title>Population level functional diversity in a microbial community revealed by comparative genomic and metagenomic analyses.</title>
        <authorList>
            <person name="Bhaya D."/>
            <person name="Grossman A.R."/>
            <person name="Steunou A.-S."/>
            <person name="Khuri N."/>
            <person name="Cohan F.M."/>
            <person name="Hamamura N."/>
            <person name="Melendrez M.C."/>
            <person name="Bateson M.M."/>
            <person name="Ward D.M."/>
            <person name="Heidelberg J.F."/>
        </authorList>
    </citation>
    <scope>NUCLEOTIDE SEQUENCE [LARGE SCALE GENOMIC DNA]</scope>
    <source>
        <strain>JA-2-3B'a(2-13)</strain>
    </source>
</reference>